<sequence length="160" mass="17890">MSKIAVYPGSFDPITMGHVDIINRISPLYDEVIVLVAQSSQKQSMFSVEERKTLIEKALSHLKNVKVDIFGGLTVEYMKKAKAQVIVRGLRAVSDFEYEMTMANMNRKLAPDFETLLVFASPEFYYISSRGVKEVAINGGALKGLVPDVVVEAMENKIRK</sequence>
<organism>
    <name type="scientific">Bdellovibrio bacteriovorus (strain ATCC 15356 / DSM 50701 / NCIMB 9529 / HD100)</name>
    <dbReference type="NCBI Taxonomy" id="264462"/>
    <lineage>
        <taxon>Bacteria</taxon>
        <taxon>Pseudomonadati</taxon>
        <taxon>Bdellovibrionota</taxon>
        <taxon>Bdellovibrionia</taxon>
        <taxon>Bdellovibrionales</taxon>
        <taxon>Pseudobdellovibrionaceae</taxon>
        <taxon>Bdellovibrio</taxon>
    </lineage>
</organism>
<name>COAD_BDEBA</name>
<gene>
    <name evidence="1" type="primary">coaD</name>
    <name type="ordered locus">Bd0623</name>
</gene>
<protein>
    <recommendedName>
        <fullName evidence="1">Phosphopantetheine adenylyltransferase</fullName>
        <ecNumber evidence="1">2.7.7.3</ecNumber>
    </recommendedName>
    <alternativeName>
        <fullName evidence="1">Dephospho-CoA pyrophosphorylase</fullName>
    </alternativeName>
    <alternativeName>
        <fullName evidence="1">Pantetheine-phosphate adenylyltransferase</fullName>
        <shortName evidence="1">PPAT</shortName>
    </alternativeName>
</protein>
<accession>Q6MQ60</accession>
<proteinExistence type="inferred from homology"/>
<dbReference type="EC" id="2.7.7.3" evidence="1"/>
<dbReference type="EMBL" id="BX842647">
    <property type="protein sequence ID" value="CAE78587.1"/>
    <property type="molecule type" value="Genomic_DNA"/>
</dbReference>
<dbReference type="RefSeq" id="WP_011163189.1">
    <property type="nucleotide sequence ID" value="NC_005363.1"/>
</dbReference>
<dbReference type="SMR" id="Q6MQ60"/>
<dbReference type="STRING" id="264462.Bd0623"/>
<dbReference type="GeneID" id="93011716"/>
<dbReference type="KEGG" id="bba:Bd0623"/>
<dbReference type="eggNOG" id="COG0669">
    <property type="taxonomic scope" value="Bacteria"/>
</dbReference>
<dbReference type="HOGENOM" id="CLU_100149_0_1_7"/>
<dbReference type="UniPathway" id="UPA00241">
    <property type="reaction ID" value="UER00355"/>
</dbReference>
<dbReference type="Proteomes" id="UP000008080">
    <property type="component" value="Chromosome"/>
</dbReference>
<dbReference type="GO" id="GO:0005737">
    <property type="term" value="C:cytoplasm"/>
    <property type="evidence" value="ECO:0007669"/>
    <property type="project" value="UniProtKB-SubCell"/>
</dbReference>
<dbReference type="GO" id="GO:0005524">
    <property type="term" value="F:ATP binding"/>
    <property type="evidence" value="ECO:0007669"/>
    <property type="project" value="UniProtKB-KW"/>
</dbReference>
<dbReference type="GO" id="GO:0004595">
    <property type="term" value="F:pantetheine-phosphate adenylyltransferase activity"/>
    <property type="evidence" value="ECO:0007669"/>
    <property type="project" value="UniProtKB-UniRule"/>
</dbReference>
<dbReference type="GO" id="GO:0015937">
    <property type="term" value="P:coenzyme A biosynthetic process"/>
    <property type="evidence" value="ECO:0007669"/>
    <property type="project" value="UniProtKB-UniRule"/>
</dbReference>
<dbReference type="CDD" id="cd02163">
    <property type="entry name" value="PPAT"/>
    <property type="match status" value="1"/>
</dbReference>
<dbReference type="Gene3D" id="3.40.50.620">
    <property type="entry name" value="HUPs"/>
    <property type="match status" value="1"/>
</dbReference>
<dbReference type="HAMAP" id="MF_00151">
    <property type="entry name" value="PPAT_bact"/>
    <property type="match status" value="1"/>
</dbReference>
<dbReference type="InterPro" id="IPR004821">
    <property type="entry name" value="Cyt_trans-like"/>
</dbReference>
<dbReference type="InterPro" id="IPR001980">
    <property type="entry name" value="PPAT"/>
</dbReference>
<dbReference type="InterPro" id="IPR014729">
    <property type="entry name" value="Rossmann-like_a/b/a_fold"/>
</dbReference>
<dbReference type="NCBIfam" id="TIGR01510">
    <property type="entry name" value="coaD_prev_kdtB"/>
    <property type="match status" value="1"/>
</dbReference>
<dbReference type="NCBIfam" id="TIGR00125">
    <property type="entry name" value="cyt_tran_rel"/>
    <property type="match status" value="1"/>
</dbReference>
<dbReference type="PANTHER" id="PTHR21342">
    <property type="entry name" value="PHOSPHOPANTETHEINE ADENYLYLTRANSFERASE"/>
    <property type="match status" value="1"/>
</dbReference>
<dbReference type="PANTHER" id="PTHR21342:SF1">
    <property type="entry name" value="PHOSPHOPANTETHEINE ADENYLYLTRANSFERASE"/>
    <property type="match status" value="1"/>
</dbReference>
<dbReference type="Pfam" id="PF01467">
    <property type="entry name" value="CTP_transf_like"/>
    <property type="match status" value="1"/>
</dbReference>
<dbReference type="PRINTS" id="PR01020">
    <property type="entry name" value="LPSBIOSNTHSS"/>
</dbReference>
<dbReference type="SUPFAM" id="SSF52374">
    <property type="entry name" value="Nucleotidylyl transferase"/>
    <property type="match status" value="1"/>
</dbReference>
<evidence type="ECO:0000255" key="1">
    <source>
        <dbReference type="HAMAP-Rule" id="MF_00151"/>
    </source>
</evidence>
<keyword id="KW-0067">ATP-binding</keyword>
<keyword id="KW-0173">Coenzyme A biosynthesis</keyword>
<keyword id="KW-0963">Cytoplasm</keyword>
<keyword id="KW-0460">Magnesium</keyword>
<keyword id="KW-0547">Nucleotide-binding</keyword>
<keyword id="KW-0548">Nucleotidyltransferase</keyword>
<keyword id="KW-1185">Reference proteome</keyword>
<keyword id="KW-0808">Transferase</keyword>
<feature type="chain" id="PRO_0000156174" description="Phosphopantetheine adenylyltransferase">
    <location>
        <begin position="1"/>
        <end position="160"/>
    </location>
</feature>
<feature type="binding site" evidence="1">
    <location>
        <begin position="10"/>
        <end position="11"/>
    </location>
    <ligand>
        <name>ATP</name>
        <dbReference type="ChEBI" id="CHEBI:30616"/>
    </ligand>
</feature>
<feature type="binding site" evidence="1">
    <location>
        <position position="10"/>
    </location>
    <ligand>
        <name>substrate</name>
    </ligand>
</feature>
<feature type="binding site" evidence="1">
    <location>
        <position position="18"/>
    </location>
    <ligand>
        <name>ATP</name>
        <dbReference type="ChEBI" id="CHEBI:30616"/>
    </ligand>
</feature>
<feature type="binding site" evidence="1">
    <location>
        <position position="42"/>
    </location>
    <ligand>
        <name>substrate</name>
    </ligand>
</feature>
<feature type="binding site" evidence="1">
    <location>
        <position position="74"/>
    </location>
    <ligand>
        <name>substrate</name>
    </ligand>
</feature>
<feature type="binding site" evidence="1">
    <location>
        <position position="88"/>
    </location>
    <ligand>
        <name>substrate</name>
    </ligand>
</feature>
<feature type="binding site" evidence="1">
    <location>
        <begin position="89"/>
        <end position="91"/>
    </location>
    <ligand>
        <name>ATP</name>
        <dbReference type="ChEBI" id="CHEBI:30616"/>
    </ligand>
</feature>
<feature type="binding site" evidence="1">
    <location>
        <position position="99"/>
    </location>
    <ligand>
        <name>ATP</name>
        <dbReference type="ChEBI" id="CHEBI:30616"/>
    </ligand>
</feature>
<feature type="binding site" evidence="1">
    <location>
        <begin position="124"/>
        <end position="130"/>
    </location>
    <ligand>
        <name>ATP</name>
        <dbReference type="ChEBI" id="CHEBI:30616"/>
    </ligand>
</feature>
<feature type="site" description="Transition state stabilizer" evidence="1">
    <location>
        <position position="18"/>
    </location>
</feature>
<reference key="1">
    <citation type="journal article" date="2004" name="Science">
        <title>A predator unmasked: life cycle of Bdellovibrio bacteriovorus from a genomic perspective.</title>
        <authorList>
            <person name="Rendulic S."/>
            <person name="Jagtap P."/>
            <person name="Rosinus A."/>
            <person name="Eppinger M."/>
            <person name="Baar C."/>
            <person name="Lanz C."/>
            <person name="Keller H."/>
            <person name="Lambert C."/>
            <person name="Evans K.J."/>
            <person name="Goesmann A."/>
            <person name="Meyer F."/>
            <person name="Sockett R.E."/>
            <person name="Schuster S.C."/>
        </authorList>
    </citation>
    <scope>NUCLEOTIDE SEQUENCE [LARGE SCALE GENOMIC DNA]</scope>
    <source>
        <strain>ATCC 15356 / DSM 50701 / NCIMB 9529 / HD100</strain>
    </source>
</reference>
<comment type="function">
    <text evidence="1">Reversibly transfers an adenylyl group from ATP to 4'-phosphopantetheine, yielding dephospho-CoA (dPCoA) and pyrophosphate.</text>
</comment>
<comment type="catalytic activity">
    <reaction evidence="1">
        <text>(R)-4'-phosphopantetheine + ATP + H(+) = 3'-dephospho-CoA + diphosphate</text>
        <dbReference type="Rhea" id="RHEA:19801"/>
        <dbReference type="ChEBI" id="CHEBI:15378"/>
        <dbReference type="ChEBI" id="CHEBI:30616"/>
        <dbReference type="ChEBI" id="CHEBI:33019"/>
        <dbReference type="ChEBI" id="CHEBI:57328"/>
        <dbReference type="ChEBI" id="CHEBI:61723"/>
        <dbReference type="EC" id="2.7.7.3"/>
    </reaction>
</comment>
<comment type="cofactor">
    <cofactor evidence="1">
        <name>Mg(2+)</name>
        <dbReference type="ChEBI" id="CHEBI:18420"/>
    </cofactor>
</comment>
<comment type="pathway">
    <text evidence="1">Cofactor biosynthesis; coenzyme A biosynthesis; CoA from (R)-pantothenate: step 4/5.</text>
</comment>
<comment type="subunit">
    <text evidence="1">Homohexamer.</text>
</comment>
<comment type="subcellular location">
    <subcellularLocation>
        <location evidence="1">Cytoplasm</location>
    </subcellularLocation>
</comment>
<comment type="similarity">
    <text evidence="1">Belongs to the bacterial CoaD family.</text>
</comment>